<comment type="function">
    <text evidence="1">Alternative, nonproton pumping NADH:quinone oxidoreductase that delivers electrons to the respiratory chain by oxidation of NADH and reduction of quinones, and contributes to the regeneration of NAD(+).</text>
</comment>
<comment type="catalytic activity">
    <reaction evidence="1">
        <text>a quinone + NADH + H(+) = a quinol + NAD(+)</text>
        <dbReference type="Rhea" id="RHEA:46160"/>
        <dbReference type="ChEBI" id="CHEBI:15378"/>
        <dbReference type="ChEBI" id="CHEBI:24646"/>
        <dbReference type="ChEBI" id="CHEBI:57540"/>
        <dbReference type="ChEBI" id="CHEBI:57945"/>
        <dbReference type="ChEBI" id="CHEBI:132124"/>
        <dbReference type="EC" id="1.6.5.9"/>
    </reaction>
</comment>
<comment type="cofactor">
    <cofactor evidence="1">
        <name>FAD</name>
        <dbReference type="ChEBI" id="CHEBI:57692"/>
    </cofactor>
    <text evidence="1">Binds 1 FAD per subunit.</text>
</comment>
<comment type="subcellular location">
    <subcellularLocation>
        <location evidence="1">Cell membrane</location>
    </subcellularLocation>
</comment>
<comment type="similarity">
    <text evidence="2">Belongs to the NADH dehydrogenase family.</text>
</comment>
<evidence type="ECO:0000250" key="1">
    <source>
        <dbReference type="UniProtKB" id="Q2FZV7"/>
    </source>
</evidence>
<evidence type="ECO:0000305" key="2"/>
<evidence type="ECO:0000312" key="3">
    <source>
        <dbReference type="EMBL" id="BAB57103.1"/>
    </source>
</evidence>
<dbReference type="EC" id="1.6.5.9" evidence="1"/>
<dbReference type="EMBL" id="BA000017">
    <property type="protein sequence ID" value="BAB57103.1"/>
    <property type="molecule type" value="Genomic_DNA"/>
</dbReference>
<dbReference type="RefSeq" id="WP_000046076.1">
    <property type="nucleotide sequence ID" value="NC_002758.2"/>
</dbReference>
<dbReference type="SMR" id="Q99VE0"/>
<dbReference type="KEGG" id="sav:SAV0941"/>
<dbReference type="HOGENOM" id="CLU_021377_7_2_9"/>
<dbReference type="PhylomeDB" id="Q99VE0"/>
<dbReference type="Proteomes" id="UP000002481">
    <property type="component" value="Chromosome"/>
</dbReference>
<dbReference type="GO" id="GO:0005886">
    <property type="term" value="C:plasma membrane"/>
    <property type="evidence" value="ECO:0007669"/>
    <property type="project" value="UniProtKB-SubCell"/>
</dbReference>
<dbReference type="GO" id="GO:0003955">
    <property type="term" value="F:NAD(P)H dehydrogenase (quinone) activity"/>
    <property type="evidence" value="ECO:0007669"/>
    <property type="project" value="TreeGrafter"/>
</dbReference>
<dbReference type="GO" id="GO:0050136">
    <property type="term" value="F:NADH:ubiquinone reductase (non-electrogenic) activity"/>
    <property type="evidence" value="ECO:0007669"/>
    <property type="project" value="UniProtKB-EC"/>
</dbReference>
<dbReference type="GO" id="GO:0019646">
    <property type="term" value="P:aerobic electron transport chain"/>
    <property type="evidence" value="ECO:0007669"/>
    <property type="project" value="TreeGrafter"/>
</dbReference>
<dbReference type="FunFam" id="3.50.50.100:FF:000004">
    <property type="entry name" value="Pyridine nucleotide-disulfide oxidoreductase"/>
    <property type="match status" value="1"/>
</dbReference>
<dbReference type="Gene3D" id="3.50.50.100">
    <property type="match status" value="1"/>
</dbReference>
<dbReference type="InterPro" id="IPR036188">
    <property type="entry name" value="FAD/NAD-bd_sf"/>
</dbReference>
<dbReference type="InterPro" id="IPR023753">
    <property type="entry name" value="FAD/NAD-binding_dom"/>
</dbReference>
<dbReference type="InterPro" id="IPR051169">
    <property type="entry name" value="NADH-Q_oxidoreductase"/>
</dbReference>
<dbReference type="PANTHER" id="PTHR42913:SF3">
    <property type="entry name" value="64 KDA MITOCHONDRIAL NADH DEHYDROGENASE (EUROFUNG)"/>
    <property type="match status" value="1"/>
</dbReference>
<dbReference type="PANTHER" id="PTHR42913">
    <property type="entry name" value="APOPTOSIS-INDUCING FACTOR 1"/>
    <property type="match status" value="1"/>
</dbReference>
<dbReference type="Pfam" id="PF07992">
    <property type="entry name" value="Pyr_redox_2"/>
    <property type="match status" value="1"/>
</dbReference>
<dbReference type="PRINTS" id="PR00368">
    <property type="entry name" value="FADPNR"/>
</dbReference>
<dbReference type="SUPFAM" id="SSF51905">
    <property type="entry name" value="FAD/NAD(P)-binding domain"/>
    <property type="match status" value="2"/>
</dbReference>
<gene>
    <name evidence="3" type="ordered locus">SAV0941</name>
</gene>
<accession>Q99VE0</accession>
<name>NDH_STAAM</name>
<proteinExistence type="inferred from homology"/>
<protein>
    <recommendedName>
        <fullName evidence="1">Type II NADH:quinone oxidoreductase</fullName>
        <ecNumber evidence="1">1.6.5.9</ecNumber>
    </recommendedName>
    <alternativeName>
        <fullName evidence="1">NDH-2</fullName>
    </alternativeName>
</protein>
<reference key="1">
    <citation type="journal article" date="2001" name="Lancet">
        <title>Whole genome sequencing of meticillin-resistant Staphylococcus aureus.</title>
        <authorList>
            <person name="Kuroda M."/>
            <person name="Ohta T."/>
            <person name="Uchiyama I."/>
            <person name="Baba T."/>
            <person name="Yuzawa H."/>
            <person name="Kobayashi I."/>
            <person name="Cui L."/>
            <person name="Oguchi A."/>
            <person name="Aoki K."/>
            <person name="Nagai Y."/>
            <person name="Lian J.-Q."/>
            <person name="Ito T."/>
            <person name="Kanamori M."/>
            <person name="Matsumaru H."/>
            <person name="Maruyama A."/>
            <person name="Murakami H."/>
            <person name="Hosoyama A."/>
            <person name="Mizutani-Ui Y."/>
            <person name="Takahashi N.K."/>
            <person name="Sawano T."/>
            <person name="Inoue R."/>
            <person name="Kaito C."/>
            <person name="Sekimizu K."/>
            <person name="Hirakawa H."/>
            <person name="Kuhara S."/>
            <person name="Goto S."/>
            <person name="Yabuzaki J."/>
            <person name="Kanehisa M."/>
            <person name="Yamashita A."/>
            <person name="Oshima K."/>
            <person name="Furuya K."/>
            <person name="Yoshino C."/>
            <person name="Shiba T."/>
            <person name="Hattori M."/>
            <person name="Ogasawara N."/>
            <person name="Hayashi H."/>
            <person name="Hiramatsu K."/>
        </authorList>
    </citation>
    <scope>NUCLEOTIDE SEQUENCE [LARGE SCALE GENOMIC DNA]</scope>
    <source>
        <strain>Mu50 / ATCC 700699</strain>
    </source>
</reference>
<sequence>MAQDRKKVLVLGAGYAGLQTVTKLQKAISTEEAEITLINKNEYHYEATWLHEASAGTLNYEDVLYPVESVLKKDKVNFVQAEVTKIDRDAKKVETNQGIYDFDILVVALGFVSETFGIEGMKDHAFQIENVITARELSRHIEDKFANYAASKEKDDNDLSILVGGAGFTGVEFLGELTDRIPELCSKYGVDQNKVKITCVEAAPKMLPMFSEELVNHAVSYLEDRGVEFKIATPIVACNEKGFVVEVDGEKQQLNAGTSVWAAGVRGSKLMEESFEGVKRGRIVTKQDLTINGYDNIFVIGDCSAFIPAGEERPLPTTAQIAMQQGESVAKNIKRILNGESTEEFEYVDRGTVCSLGSHDGVGMVFGKPIAGKKAAFMKKVIDTRAVFKIGGIGLAFKKGKF</sequence>
<keyword id="KW-1003">Cell membrane</keyword>
<keyword id="KW-0274">FAD</keyword>
<keyword id="KW-0285">Flavoprotein</keyword>
<keyword id="KW-0472">Membrane</keyword>
<keyword id="KW-0520">NAD</keyword>
<keyword id="KW-0560">Oxidoreductase</keyword>
<organism>
    <name type="scientific">Staphylococcus aureus (strain Mu50 / ATCC 700699)</name>
    <dbReference type="NCBI Taxonomy" id="158878"/>
    <lineage>
        <taxon>Bacteria</taxon>
        <taxon>Bacillati</taxon>
        <taxon>Bacillota</taxon>
        <taxon>Bacilli</taxon>
        <taxon>Bacillales</taxon>
        <taxon>Staphylococcaceae</taxon>
        <taxon>Staphylococcus</taxon>
    </lineage>
</organism>
<feature type="chain" id="PRO_0000287368" description="Type II NADH:quinone oxidoreductase">
    <location>
        <begin position="1"/>
        <end position="402"/>
    </location>
</feature>
<feature type="active site" evidence="1">
    <location>
        <position position="172"/>
    </location>
</feature>
<feature type="binding site" evidence="1">
    <location>
        <begin position="12"/>
        <end position="16"/>
    </location>
    <ligand>
        <name>FAD</name>
        <dbReference type="ChEBI" id="CHEBI:57692"/>
    </ligand>
</feature>
<feature type="binding site" evidence="1">
    <location>
        <begin position="39"/>
        <end position="40"/>
    </location>
    <ligand>
        <name>FAD</name>
        <dbReference type="ChEBI" id="CHEBI:57692"/>
    </ligand>
</feature>
<feature type="binding site" evidence="1">
    <location>
        <position position="83"/>
    </location>
    <ligand>
        <name>FAD</name>
        <dbReference type="ChEBI" id="CHEBI:57692"/>
    </ligand>
</feature>
<feature type="binding site" evidence="1">
    <location>
        <position position="302"/>
    </location>
    <ligand>
        <name>FAD</name>
        <dbReference type="ChEBI" id="CHEBI:57692"/>
    </ligand>
</feature>
<feature type="binding site" evidence="1">
    <location>
        <begin position="319"/>
        <end position="320"/>
    </location>
    <ligand>
        <name>FAD</name>
        <dbReference type="ChEBI" id="CHEBI:57692"/>
    </ligand>
</feature>
<feature type="binding site" evidence="1">
    <location>
        <position position="379"/>
    </location>
    <ligand>
        <name>FAD</name>
        <dbReference type="ChEBI" id="CHEBI:57692"/>
    </ligand>
</feature>